<comment type="function">
    <text evidence="1">Transfers the 4'-phosphopantetheine moiety from coenzyme A to a Ser of acyl-carrier-protein.</text>
</comment>
<comment type="catalytic activity">
    <reaction evidence="1">
        <text>apo-[ACP] + CoA = holo-[ACP] + adenosine 3',5'-bisphosphate + H(+)</text>
        <dbReference type="Rhea" id="RHEA:12068"/>
        <dbReference type="Rhea" id="RHEA-COMP:9685"/>
        <dbReference type="Rhea" id="RHEA-COMP:9690"/>
        <dbReference type="ChEBI" id="CHEBI:15378"/>
        <dbReference type="ChEBI" id="CHEBI:29999"/>
        <dbReference type="ChEBI" id="CHEBI:57287"/>
        <dbReference type="ChEBI" id="CHEBI:58343"/>
        <dbReference type="ChEBI" id="CHEBI:64479"/>
        <dbReference type="EC" id="2.7.8.7"/>
    </reaction>
</comment>
<comment type="cofactor">
    <cofactor evidence="1">
        <name>Mg(2+)</name>
        <dbReference type="ChEBI" id="CHEBI:18420"/>
    </cofactor>
</comment>
<comment type="subcellular location">
    <subcellularLocation>
        <location evidence="1">Cytoplasm</location>
    </subcellularLocation>
</comment>
<comment type="similarity">
    <text evidence="1">Belongs to the P-Pant transferase superfamily. AcpS family.</text>
</comment>
<accession>B0CKY5</accession>
<gene>
    <name evidence="1" type="primary">acpS</name>
    <name type="ordered locus">BSUIS_A0687</name>
</gene>
<evidence type="ECO:0000255" key="1">
    <source>
        <dbReference type="HAMAP-Rule" id="MF_00101"/>
    </source>
</evidence>
<protein>
    <recommendedName>
        <fullName evidence="1">Holo-[acyl-carrier-protein] synthase</fullName>
        <shortName evidence="1">Holo-ACP synthase</shortName>
        <ecNumber evidence="1">2.7.8.7</ecNumber>
    </recommendedName>
    <alternativeName>
        <fullName evidence="1">4'-phosphopantetheinyl transferase AcpS</fullName>
    </alternativeName>
</protein>
<proteinExistence type="inferred from homology"/>
<sequence length="134" mass="14645">MIVGIGSDLIDIRRVEKTLERHGSRFRDRVFTEIEQRKSEGRKQRAASYAKRFAAKEACAKALGTGIAEGVFWRDMGVVNTPSGKPTMHLTGGAAKQLQKLLPAGTNAAIHLTITDDFPLAQAFVIIEALPVLE</sequence>
<name>ACPS_BRUSI</name>
<feature type="chain" id="PRO_1000075632" description="Holo-[acyl-carrier-protein] synthase">
    <location>
        <begin position="1"/>
        <end position="134"/>
    </location>
</feature>
<feature type="binding site" evidence="1">
    <location>
        <position position="8"/>
    </location>
    <ligand>
        <name>Mg(2+)</name>
        <dbReference type="ChEBI" id="CHEBI:18420"/>
    </ligand>
</feature>
<feature type="binding site" evidence="1">
    <location>
        <position position="57"/>
    </location>
    <ligand>
        <name>Mg(2+)</name>
        <dbReference type="ChEBI" id="CHEBI:18420"/>
    </ligand>
</feature>
<reference key="1">
    <citation type="submission" date="2007-12" db="EMBL/GenBank/DDBJ databases">
        <title>Brucella suis ATCC 23445 whole genome shotgun sequencing project.</title>
        <authorList>
            <person name="Setubal J.C."/>
            <person name="Bowns C."/>
            <person name="Boyle S."/>
            <person name="Crasta O.R."/>
            <person name="Czar M.J."/>
            <person name="Dharmanolla C."/>
            <person name="Gillespie J.J."/>
            <person name="Kenyon R.W."/>
            <person name="Lu J."/>
            <person name="Mane S."/>
            <person name="Mohapatra S."/>
            <person name="Nagrani S."/>
            <person name="Purkayastha A."/>
            <person name="Rajasimha H.K."/>
            <person name="Shallom J.M."/>
            <person name="Shallom S."/>
            <person name="Shukla M."/>
            <person name="Snyder E.E."/>
            <person name="Sobral B.W."/>
            <person name="Wattam A.R."/>
            <person name="Will R."/>
            <person name="Williams K."/>
            <person name="Yoo H."/>
            <person name="Bruce D."/>
            <person name="Detter C."/>
            <person name="Munk C."/>
            <person name="Brettin T.S."/>
        </authorList>
    </citation>
    <scope>NUCLEOTIDE SEQUENCE [LARGE SCALE GENOMIC DNA]</scope>
    <source>
        <strain>ATCC 23445 / NCTC 10510</strain>
    </source>
</reference>
<organism>
    <name type="scientific">Brucella suis (strain ATCC 23445 / NCTC 10510)</name>
    <dbReference type="NCBI Taxonomy" id="470137"/>
    <lineage>
        <taxon>Bacteria</taxon>
        <taxon>Pseudomonadati</taxon>
        <taxon>Pseudomonadota</taxon>
        <taxon>Alphaproteobacteria</taxon>
        <taxon>Hyphomicrobiales</taxon>
        <taxon>Brucellaceae</taxon>
        <taxon>Brucella/Ochrobactrum group</taxon>
        <taxon>Brucella</taxon>
    </lineage>
</organism>
<dbReference type="EC" id="2.7.8.7" evidence="1"/>
<dbReference type="EMBL" id="CP000911">
    <property type="protein sequence ID" value="ABY37765.1"/>
    <property type="molecule type" value="Genomic_DNA"/>
</dbReference>
<dbReference type="RefSeq" id="WP_002963803.1">
    <property type="nucleotide sequence ID" value="NC_010169.1"/>
</dbReference>
<dbReference type="SMR" id="B0CKY5"/>
<dbReference type="GeneID" id="97534013"/>
<dbReference type="KEGG" id="bmt:BSUIS_A0687"/>
<dbReference type="HOGENOM" id="CLU_089696_0_2_5"/>
<dbReference type="Proteomes" id="UP000008545">
    <property type="component" value="Chromosome I"/>
</dbReference>
<dbReference type="GO" id="GO:0005737">
    <property type="term" value="C:cytoplasm"/>
    <property type="evidence" value="ECO:0007669"/>
    <property type="project" value="UniProtKB-SubCell"/>
</dbReference>
<dbReference type="GO" id="GO:0008897">
    <property type="term" value="F:holo-[acyl-carrier-protein] synthase activity"/>
    <property type="evidence" value="ECO:0007669"/>
    <property type="project" value="UniProtKB-UniRule"/>
</dbReference>
<dbReference type="GO" id="GO:0000287">
    <property type="term" value="F:magnesium ion binding"/>
    <property type="evidence" value="ECO:0007669"/>
    <property type="project" value="UniProtKB-UniRule"/>
</dbReference>
<dbReference type="GO" id="GO:0006633">
    <property type="term" value="P:fatty acid biosynthetic process"/>
    <property type="evidence" value="ECO:0007669"/>
    <property type="project" value="UniProtKB-UniRule"/>
</dbReference>
<dbReference type="Gene3D" id="3.90.470.20">
    <property type="entry name" value="4'-phosphopantetheinyl transferase domain"/>
    <property type="match status" value="1"/>
</dbReference>
<dbReference type="HAMAP" id="MF_00101">
    <property type="entry name" value="AcpS"/>
    <property type="match status" value="1"/>
</dbReference>
<dbReference type="InterPro" id="IPR008278">
    <property type="entry name" value="4-PPantetheinyl_Trfase_dom"/>
</dbReference>
<dbReference type="InterPro" id="IPR037143">
    <property type="entry name" value="4-PPantetheinyl_Trfase_dom_sf"/>
</dbReference>
<dbReference type="InterPro" id="IPR002582">
    <property type="entry name" value="ACPS"/>
</dbReference>
<dbReference type="InterPro" id="IPR004568">
    <property type="entry name" value="Ppantetheine-prot_Trfase_dom"/>
</dbReference>
<dbReference type="NCBIfam" id="TIGR00516">
    <property type="entry name" value="acpS"/>
    <property type="match status" value="1"/>
</dbReference>
<dbReference type="NCBIfam" id="TIGR00556">
    <property type="entry name" value="pantethn_trn"/>
    <property type="match status" value="1"/>
</dbReference>
<dbReference type="Pfam" id="PF01648">
    <property type="entry name" value="ACPS"/>
    <property type="match status" value="1"/>
</dbReference>
<dbReference type="SUPFAM" id="SSF56214">
    <property type="entry name" value="4'-phosphopantetheinyl transferase"/>
    <property type="match status" value="1"/>
</dbReference>
<keyword id="KW-0963">Cytoplasm</keyword>
<keyword id="KW-0275">Fatty acid biosynthesis</keyword>
<keyword id="KW-0276">Fatty acid metabolism</keyword>
<keyword id="KW-0444">Lipid biosynthesis</keyword>
<keyword id="KW-0443">Lipid metabolism</keyword>
<keyword id="KW-0460">Magnesium</keyword>
<keyword id="KW-0479">Metal-binding</keyword>
<keyword id="KW-0808">Transferase</keyword>